<reference key="1">
    <citation type="journal article" date="2002" name="Cell Death Differ.">
        <title>Death effector domain-containing proteins DEDD and FLAME-3 form nuclear complexes with the TFIIIC102 subunit of human transcription factor IIIC.</title>
        <authorList>
            <person name="Zhan Y."/>
            <person name="Hegde R."/>
            <person name="Srinivasula S.M."/>
            <person name="Fernandes-Alnemri T."/>
            <person name="Alnemri E.S."/>
        </authorList>
    </citation>
    <scope>NUCLEOTIDE SEQUENCE [MRNA]</scope>
    <source>
        <strain>C57BL/6J</strain>
    </source>
</reference>
<reference key="2">
    <citation type="journal article" date="2003" name="Oncogene">
        <title>DEDD and DEDD2 associate with caspase-8/10 and signal cell death.</title>
        <authorList>
            <person name="Alcivar A."/>
            <person name="Hu S."/>
            <person name="Tang J."/>
            <person name="Yang X."/>
        </authorList>
    </citation>
    <scope>NUCLEOTIDE SEQUENCE [MRNA]</scope>
</reference>
<reference key="3">
    <citation type="journal article" date="2004" name="Genome Res.">
        <title>The status, quality, and expansion of the NIH full-length cDNA project: the Mammalian Gene Collection (MGC).</title>
        <authorList>
            <consortium name="The MGC Project Team"/>
        </authorList>
    </citation>
    <scope>NUCLEOTIDE SEQUENCE [LARGE SCALE MRNA]</scope>
    <source>
        <strain>FVB/N</strain>
        <tissue>Kidney</tissue>
    </source>
</reference>
<comment type="function">
    <text>May play a critical role in death receptor-induced apoptosis and may target CASP8 and CASP10 to the nucleus. May regulate degradation of intermediate filaments during apoptosis. May play a role in the general transcription machinery in the nucleus and might be an important regulator of the activity of GTF3C3.</text>
</comment>
<comment type="subunit">
    <text evidence="1">Interacts with CASP8, CASP10 and GTF3C3. Homodimerizes and heterodimerizes with DEDD (By similarity).</text>
</comment>
<comment type="subcellular location">
    <subcellularLocation>
        <location evidence="1">Nucleus</location>
        <location evidence="1">Nucleolus</location>
    </subcellularLocation>
    <text evidence="1">Nuclear, accumulated in subnuclear structures resembling nucleoli.</text>
</comment>
<comment type="tissue specificity">
    <text>Expression is high in liver, heart, kidney, and testis but low in brain, spleen, lung, and skeleton muscle.</text>
</comment>
<comment type="domain">
    <text evidence="1">Interactions with CASP8 and CASP10 are mediated by the DED domain.</text>
</comment>
<name>DEDD2_MOUSE</name>
<gene>
    <name type="primary">Dedd2</name>
    <name type="synonym">Flame3</name>
</gene>
<keyword id="KW-0053">Apoptosis</keyword>
<keyword id="KW-0238">DNA-binding</keyword>
<keyword id="KW-0539">Nucleus</keyword>
<keyword id="KW-1185">Reference proteome</keyword>
<keyword id="KW-0804">Transcription</keyword>
<keyword id="KW-0805">Transcription regulation</keyword>
<protein>
    <recommendedName>
        <fullName>DNA-binding death effector domain-containing protein 2</fullName>
    </recommendedName>
    <alternativeName>
        <fullName>DED-containing protein FLAME-3</fullName>
    </alternativeName>
    <alternativeName>
        <fullName>FADD-like anti-apoptotic molecule 3</fullName>
    </alternativeName>
</protein>
<accession>Q8QZV0</accession>
<accession>Q569Y9</accession>
<accession>Q8JZV1</accession>
<proteinExistence type="evidence at transcript level"/>
<feature type="chain" id="PRO_0000191278" description="DNA-binding death effector domain-containing protein 2">
    <location>
        <begin position="1"/>
        <end position="330"/>
    </location>
</feature>
<feature type="domain" description="DED" evidence="3">
    <location>
        <begin position="25"/>
        <end position="104"/>
    </location>
</feature>
<feature type="region of interest" description="Disordered" evidence="4">
    <location>
        <begin position="104"/>
        <end position="195"/>
    </location>
</feature>
<feature type="short sequence motif" description="Nuclear localization signal" evidence="2">
    <location>
        <begin position="104"/>
        <end position="109"/>
    </location>
</feature>
<feature type="short sequence motif" description="Bipartite nuclear localization signal" evidence="2">
    <location>
        <begin position="156"/>
        <end position="174"/>
    </location>
</feature>
<feature type="compositionally biased region" description="Low complexity" evidence="4">
    <location>
        <begin position="137"/>
        <end position="147"/>
    </location>
</feature>
<sequence>MALSGSTPAPSWEEDECLDYYGMLSLHRMFEVVGGQLTECELELLAFLLDEAPGAPGGLARARSGLELLLELERRGQCDESNLRLLSQLLRVLARHDLLPHLARKRRRPVSPERYSYGNPSSSSKRTEDSCRRRRQASSSSDSPQSQWDTGSPPTKRQRRSRGRPSSGARQRRRAGLAASQQHQQHQELGRPSSEGKVTCDIRLRVRAEYCEHGPALEQGVASRRPQALARQLDVFGQATAVLRSRDLGSVVCDIKFSELSYLDAFWGDYLSGALLQALRGVFLTEALREAVGREAVRLLVSVDEADYEAGRRRLLLMEEEGGRRGTEAS</sequence>
<organism>
    <name type="scientific">Mus musculus</name>
    <name type="common">Mouse</name>
    <dbReference type="NCBI Taxonomy" id="10090"/>
    <lineage>
        <taxon>Eukaryota</taxon>
        <taxon>Metazoa</taxon>
        <taxon>Chordata</taxon>
        <taxon>Craniata</taxon>
        <taxon>Vertebrata</taxon>
        <taxon>Euteleostomi</taxon>
        <taxon>Mammalia</taxon>
        <taxon>Eutheria</taxon>
        <taxon>Euarchontoglires</taxon>
        <taxon>Glires</taxon>
        <taxon>Rodentia</taxon>
        <taxon>Myomorpha</taxon>
        <taxon>Muroidea</taxon>
        <taxon>Muridae</taxon>
        <taxon>Murinae</taxon>
        <taxon>Mus</taxon>
        <taxon>Mus</taxon>
    </lineage>
</organism>
<dbReference type="EMBL" id="AF457576">
    <property type="protein sequence ID" value="AAM10836.1"/>
    <property type="molecule type" value="mRNA"/>
</dbReference>
<dbReference type="EMBL" id="AF543541">
    <property type="protein sequence ID" value="AAN33179.1"/>
    <property type="molecule type" value="mRNA"/>
</dbReference>
<dbReference type="EMBL" id="BC092250">
    <property type="protein sequence ID" value="AAH92250.1"/>
    <property type="molecule type" value="mRNA"/>
</dbReference>
<dbReference type="CCDS" id="CCDS20973.1"/>
<dbReference type="RefSeq" id="NP_997560.3">
    <property type="nucleotide sequence ID" value="NM_207677.3"/>
</dbReference>
<dbReference type="RefSeq" id="XP_006540385.1">
    <property type="nucleotide sequence ID" value="XM_006540322.1"/>
</dbReference>
<dbReference type="RefSeq" id="XP_030098785.1">
    <property type="nucleotide sequence ID" value="XM_030242925.2"/>
</dbReference>
<dbReference type="RefSeq" id="XP_036009274.1">
    <property type="nucleotide sequence ID" value="XM_036153381.1"/>
</dbReference>
<dbReference type="SMR" id="Q8QZV0"/>
<dbReference type="FunCoup" id="Q8QZV0">
    <property type="interactions" value="2166"/>
</dbReference>
<dbReference type="STRING" id="10090.ENSMUSP00000146052"/>
<dbReference type="iPTMnet" id="Q8QZV0"/>
<dbReference type="PhosphoSitePlus" id="Q8QZV0"/>
<dbReference type="PaxDb" id="10090-ENSMUSP00000049763"/>
<dbReference type="Antibodypedia" id="17411">
    <property type="antibodies" value="201 antibodies from 30 providers"/>
</dbReference>
<dbReference type="Ensembl" id="ENSMUST00000058702.7">
    <property type="protein sequence ID" value="ENSMUSP00000049763.6"/>
    <property type="gene ID" value="ENSMUSG00000054499.10"/>
</dbReference>
<dbReference type="Ensembl" id="ENSMUST00000205271.2">
    <property type="protein sequence ID" value="ENSMUSP00000146052.2"/>
    <property type="gene ID" value="ENSMUSG00000054499.10"/>
</dbReference>
<dbReference type="GeneID" id="67379"/>
<dbReference type="KEGG" id="mmu:67379"/>
<dbReference type="UCSC" id="uc009fru.1">
    <property type="organism name" value="mouse"/>
</dbReference>
<dbReference type="AGR" id="MGI:1914629"/>
<dbReference type="CTD" id="162989"/>
<dbReference type="MGI" id="MGI:1914629">
    <property type="gene designation" value="Dedd2"/>
</dbReference>
<dbReference type="VEuPathDB" id="HostDB:ENSMUSG00000054499"/>
<dbReference type="eggNOG" id="ENOG502QQKR">
    <property type="taxonomic scope" value="Eukaryota"/>
</dbReference>
<dbReference type="GeneTree" id="ENSGT00390000008714"/>
<dbReference type="HOGENOM" id="CLU_053869_0_0_1"/>
<dbReference type="InParanoid" id="Q8QZV0"/>
<dbReference type="OMA" id="GHPETHW"/>
<dbReference type="OrthoDB" id="6422954at2759"/>
<dbReference type="PhylomeDB" id="Q8QZV0"/>
<dbReference type="TreeFam" id="TF331807"/>
<dbReference type="BioGRID-ORCS" id="67379">
    <property type="hits" value="1 hit in 77 CRISPR screens"/>
</dbReference>
<dbReference type="ChiTaRS" id="Dedd2">
    <property type="organism name" value="mouse"/>
</dbReference>
<dbReference type="PRO" id="PR:Q8QZV0"/>
<dbReference type="Proteomes" id="UP000000589">
    <property type="component" value="Chromosome 7"/>
</dbReference>
<dbReference type="RNAct" id="Q8QZV0">
    <property type="molecule type" value="protein"/>
</dbReference>
<dbReference type="Bgee" id="ENSMUSG00000054499">
    <property type="expression patterns" value="Expressed in granulocyte and 159 other cell types or tissues"/>
</dbReference>
<dbReference type="GO" id="GO:0005730">
    <property type="term" value="C:nucleolus"/>
    <property type="evidence" value="ECO:0007669"/>
    <property type="project" value="UniProtKB-SubCell"/>
</dbReference>
<dbReference type="GO" id="GO:0005654">
    <property type="term" value="C:nucleoplasm"/>
    <property type="evidence" value="ECO:0007669"/>
    <property type="project" value="Ensembl"/>
</dbReference>
<dbReference type="GO" id="GO:0005634">
    <property type="term" value="C:nucleus"/>
    <property type="evidence" value="ECO:0000247"/>
    <property type="project" value="MGI"/>
</dbReference>
<dbReference type="GO" id="GO:0003677">
    <property type="term" value="F:DNA binding"/>
    <property type="evidence" value="ECO:0007669"/>
    <property type="project" value="UniProtKB-KW"/>
</dbReference>
<dbReference type="GO" id="GO:0030262">
    <property type="term" value="P:apoptotic nuclear changes"/>
    <property type="evidence" value="ECO:0007669"/>
    <property type="project" value="Ensembl"/>
</dbReference>
<dbReference type="GO" id="GO:0008625">
    <property type="term" value="P:extrinsic apoptotic signaling pathway via death domain receptors"/>
    <property type="evidence" value="ECO:0007669"/>
    <property type="project" value="Ensembl"/>
</dbReference>
<dbReference type="GO" id="GO:2001238">
    <property type="term" value="P:positive regulation of extrinsic apoptotic signaling pathway"/>
    <property type="evidence" value="ECO:0007669"/>
    <property type="project" value="Ensembl"/>
</dbReference>
<dbReference type="FunFam" id="1.10.533.10:FF:000023">
    <property type="entry name" value="DNA-binding death effector domain-containing protein 2"/>
    <property type="match status" value="1"/>
</dbReference>
<dbReference type="Gene3D" id="1.10.533.10">
    <property type="entry name" value="Death Domain, Fas"/>
    <property type="match status" value="1"/>
</dbReference>
<dbReference type="InterPro" id="IPR011029">
    <property type="entry name" value="DEATH-like_dom_sf"/>
</dbReference>
<dbReference type="InterPro" id="IPR001875">
    <property type="entry name" value="DED_dom"/>
</dbReference>
<dbReference type="InterPro" id="IPR038856">
    <property type="entry name" value="DEDD/DEDD2"/>
</dbReference>
<dbReference type="InterPro" id="IPR049341">
    <property type="entry name" value="TRADD-like_N"/>
</dbReference>
<dbReference type="PANTHER" id="PTHR15205">
    <property type="entry name" value="DEATH EFFECTOR DOMAIN-CONTAINING PROTEIN"/>
    <property type="match status" value="1"/>
</dbReference>
<dbReference type="PANTHER" id="PTHR15205:SF1">
    <property type="entry name" value="DNA-BINDING DEATH EFFECTOR DOMAIN-CONTAINING PROTEIN 2"/>
    <property type="match status" value="1"/>
</dbReference>
<dbReference type="Pfam" id="PF01335">
    <property type="entry name" value="DED"/>
    <property type="match status" value="1"/>
</dbReference>
<dbReference type="Pfam" id="PF20694">
    <property type="entry name" value="TRADD-like_N"/>
    <property type="match status" value="1"/>
</dbReference>
<dbReference type="SMART" id="SM00031">
    <property type="entry name" value="DED"/>
    <property type="match status" value="1"/>
</dbReference>
<dbReference type="SUPFAM" id="SSF47986">
    <property type="entry name" value="DEATH domain"/>
    <property type="match status" value="1"/>
</dbReference>
<dbReference type="PROSITE" id="PS50168">
    <property type="entry name" value="DED"/>
    <property type="match status" value="1"/>
</dbReference>
<evidence type="ECO:0000250" key="1"/>
<evidence type="ECO:0000255" key="2"/>
<evidence type="ECO:0000255" key="3">
    <source>
        <dbReference type="PROSITE-ProRule" id="PRU00065"/>
    </source>
</evidence>
<evidence type="ECO:0000256" key="4">
    <source>
        <dbReference type="SAM" id="MobiDB-lite"/>
    </source>
</evidence>